<organism>
    <name type="scientific">Corynebacterium glutamicum (strain R)</name>
    <dbReference type="NCBI Taxonomy" id="340322"/>
    <lineage>
        <taxon>Bacteria</taxon>
        <taxon>Bacillati</taxon>
        <taxon>Actinomycetota</taxon>
        <taxon>Actinomycetes</taxon>
        <taxon>Mycobacteriales</taxon>
        <taxon>Corynebacteriaceae</taxon>
        <taxon>Corynebacterium</taxon>
    </lineage>
</organism>
<dbReference type="EMBL" id="AP009044">
    <property type="protein sequence ID" value="BAF53580.1"/>
    <property type="molecule type" value="Genomic_DNA"/>
</dbReference>
<dbReference type="RefSeq" id="WP_003854295.1">
    <property type="nucleotide sequence ID" value="NC_009342.1"/>
</dbReference>
<dbReference type="SMR" id="A4QBI3"/>
<dbReference type="GeneID" id="1021510"/>
<dbReference type="KEGG" id="cgt:cgR_0611"/>
<dbReference type="HOGENOM" id="CLU_036235_2_1_11"/>
<dbReference type="PhylomeDB" id="A4QBI3"/>
<dbReference type="Proteomes" id="UP000006698">
    <property type="component" value="Chromosome"/>
</dbReference>
<dbReference type="GO" id="GO:0015934">
    <property type="term" value="C:large ribosomal subunit"/>
    <property type="evidence" value="ECO:0007669"/>
    <property type="project" value="InterPro"/>
</dbReference>
<dbReference type="GO" id="GO:0019843">
    <property type="term" value="F:rRNA binding"/>
    <property type="evidence" value="ECO:0007669"/>
    <property type="project" value="UniProtKB-UniRule"/>
</dbReference>
<dbReference type="GO" id="GO:0003735">
    <property type="term" value="F:structural constituent of ribosome"/>
    <property type="evidence" value="ECO:0007669"/>
    <property type="project" value="InterPro"/>
</dbReference>
<dbReference type="GO" id="GO:0016740">
    <property type="term" value="F:transferase activity"/>
    <property type="evidence" value="ECO:0007669"/>
    <property type="project" value="InterPro"/>
</dbReference>
<dbReference type="GO" id="GO:0002181">
    <property type="term" value="P:cytoplasmic translation"/>
    <property type="evidence" value="ECO:0007669"/>
    <property type="project" value="TreeGrafter"/>
</dbReference>
<dbReference type="FunFam" id="2.30.30.30:FF:000001">
    <property type="entry name" value="50S ribosomal protein L2"/>
    <property type="match status" value="1"/>
</dbReference>
<dbReference type="FunFam" id="2.40.50.140:FF:000003">
    <property type="entry name" value="50S ribosomal protein L2"/>
    <property type="match status" value="1"/>
</dbReference>
<dbReference type="FunFam" id="4.10.950.10:FF:000001">
    <property type="entry name" value="50S ribosomal protein L2"/>
    <property type="match status" value="1"/>
</dbReference>
<dbReference type="Gene3D" id="2.30.30.30">
    <property type="match status" value="1"/>
</dbReference>
<dbReference type="Gene3D" id="2.40.50.140">
    <property type="entry name" value="Nucleic acid-binding proteins"/>
    <property type="match status" value="1"/>
</dbReference>
<dbReference type="Gene3D" id="4.10.950.10">
    <property type="entry name" value="Ribosomal protein L2, domain 3"/>
    <property type="match status" value="1"/>
</dbReference>
<dbReference type="HAMAP" id="MF_01320_B">
    <property type="entry name" value="Ribosomal_uL2_B"/>
    <property type="match status" value="1"/>
</dbReference>
<dbReference type="InterPro" id="IPR012340">
    <property type="entry name" value="NA-bd_OB-fold"/>
</dbReference>
<dbReference type="InterPro" id="IPR014722">
    <property type="entry name" value="Rib_uL2_dom2"/>
</dbReference>
<dbReference type="InterPro" id="IPR002171">
    <property type="entry name" value="Ribosomal_uL2"/>
</dbReference>
<dbReference type="InterPro" id="IPR005880">
    <property type="entry name" value="Ribosomal_uL2_bac/org-type"/>
</dbReference>
<dbReference type="InterPro" id="IPR022669">
    <property type="entry name" value="Ribosomal_uL2_C"/>
</dbReference>
<dbReference type="InterPro" id="IPR022671">
    <property type="entry name" value="Ribosomal_uL2_CS"/>
</dbReference>
<dbReference type="InterPro" id="IPR014726">
    <property type="entry name" value="Ribosomal_uL2_dom3"/>
</dbReference>
<dbReference type="InterPro" id="IPR022666">
    <property type="entry name" value="Ribosomal_uL2_RNA-bd_dom"/>
</dbReference>
<dbReference type="InterPro" id="IPR008991">
    <property type="entry name" value="Translation_prot_SH3-like_sf"/>
</dbReference>
<dbReference type="NCBIfam" id="TIGR01171">
    <property type="entry name" value="rplB_bact"/>
    <property type="match status" value="1"/>
</dbReference>
<dbReference type="PANTHER" id="PTHR13691:SF5">
    <property type="entry name" value="LARGE RIBOSOMAL SUBUNIT PROTEIN UL2M"/>
    <property type="match status" value="1"/>
</dbReference>
<dbReference type="PANTHER" id="PTHR13691">
    <property type="entry name" value="RIBOSOMAL PROTEIN L2"/>
    <property type="match status" value="1"/>
</dbReference>
<dbReference type="Pfam" id="PF00181">
    <property type="entry name" value="Ribosomal_L2"/>
    <property type="match status" value="1"/>
</dbReference>
<dbReference type="Pfam" id="PF03947">
    <property type="entry name" value="Ribosomal_L2_C"/>
    <property type="match status" value="1"/>
</dbReference>
<dbReference type="PIRSF" id="PIRSF002158">
    <property type="entry name" value="Ribosomal_L2"/>
    <property type="match status" value="1"/>
</dbReference>
<dbReference type="SMART" id="SM01383">
    <property type="entry name" value="Ribosomal_L2"/>
    <property type="match status" value="1"/>
</dbReference>
<dbReference type="SMART" id="SM01382">
    <property type="entry name" value="Ribosomal_L2_C"/>
    <property type="match status" value="1"/>
</dbReference>
<dbReference type="SUPFAM" id="SSF50249">
    <property type="entry name" value="Nucleic acid-binding proteins"/>
    <property type="match status" value="1"/>
</dbReference>
<dbReference type="SUPFAM" id="SSF50104">
    <property type="entry name" value="Translation proteins SH3-like domain"/>
    <property type="match status" value="1"/>
</dbReference>
<dbReference type="PROSITE" id="PS00467">
    <property type="entry name" value="RIBOSOMAL_L2"/>
    <property type="match status" value="1"/>
</dbReference>
<sequence>MAIRKYKPTTPGRRASSVSMFTEITRSTPEKSLLRPLSKTGGRNSHGHITTRHRGGGHKRRYRVIDFRRNDKDGVLAKVAHIEYDPNRTANIALLHYFDGEKRYILAPKGLTQGTVIESGAAADIKVGNNLPLRNIPTGTTIHNVELKPGAGAKLARSAGASIQLLGKEGSYAVLRMPSSEIRRVDIRCRATVGEVGNAEQINIRWGKAGRMRWKGWRPTVRGVVMNPVDHPHGGGEGKTSGGRHPVSPWGQKEGRTRKPKRYSDDMIVRRRRANKNKKR</sequence>
<feature type="chain" id="PRO_0000309906" description="Large ribosomal subunit protein uL2">
    <location>
        <begin position="1"/>
        <end position="280"/>
    </location>
</feature>
<feature type="region of interest" description="Disordered" evidence="2">
    <location>
        <begin position="29"/>
        <end position="58"/>
    </location>
</feature>
<feature type="region of interest" description="Disordered" evidence="2">
    <location>
        <begin position="225"/>
        <end position="280"/>
    </location>
</feature>
<feature type="compositionally biased region" description="Basic residues" evidence="2">
    <location>
        <begin position="45"/>
        <end position="58"/>
    </location>
</feature>
<feature type="compositionally biased region" description="Basic and acidic residues" evidence="2">
    <location>
        <begin position="253"/>
        <end position="269"/>
    </location>
</feature>
<feature type="compositionally biased region" description="Basic residues" evidence="2">
    <location>
        <begin position="270"/>
        <end position="280"/>
    </location>
</feature>
<protein>
    <recommendedName>
        <fullName evidence="1">Large ribosomal subunit protein uL2</fullName>
    </recommendedName>
    <alternativeName>
        <fullName evidence="3">50S ribosomal protein L2</fullName>
    </alternativeName>
</protein>
<reference key="1">
    <citation type="journal article" date="2007" name="Microbiology">
        <title>Comparative analysis of the Corynebacterium glutamicum group and complete genome sequence of strain R.</title>
        <authorList>
            <person name="Yukawa H."/>
            <person name="Omumasaba C.A."/>
            <person name="Nonaka H."/>
            <person name="Kos P."/>
            <person name="Okai N."/>
            <person name="Suzuki N."/>
            <person name="Suda M."/>
            <person name="Tsuge Y."/>
            <person name="Watanabe J."/>
            <person name="Ikeda Y."/>
            <person name="Vertes A.A."/>
            <person name="Inui M."/>
        </authorList>
    </citation>
    <scope>NUCLEOTIDE SEQUENCE [LARGE SCALE GENOMIC DNA]</scope>
    <source>
        <strain>R</strain>
    </source>
</reference>
<accession>A4QBI3</accession>
<gene>
    <name evidence="1" type="primary">rplB</name>
    <name type="ordered locus">cgR_0611</name>
</gene>
<name>RL2_CORGB</name>
<proteinExistence type="inferred from homology"/>
<evidence type="ECO:0000255" key="1">
    <source>
        <dbReference type="HAMAP-Rule" id="MF_01320"/>
    </source>
</evidence>
<evidence type="ECO:0000256" key="2">
    <source>
        <dbReference type="SAM" id="MobiDB-lite"/>
    </source>
</evidence>
<evidence type="ECO:0000305" key="3"/>
<keyword id="KW-0687">Ribonucleoprotein</keyword>
<keyword id="KW-0689">Ribosomal protein</keyword>
<keyword id="KW-0694">RNA-binding</keyword>
<keyword id="KW-0699">rRNA-binding</keyword>
<comment type="function">
    <text evidence="1">One of the primary rRNA binding proteins. Required for association of the 30S and 50S subunits to form the 70S ribosome, for tRNA binding and peptide bond formation. It has been suggested to have peptidyltransferase activity; this is somewhat controversial. Makes several contacts with the 16S rRNA in the 70S ribosome.</text>
</comment>
<comment type="subunit">
    <text evidence="1">Part of the 50S ribosomal subunit. Forms a bridge to the 30S subunit in the 70S ribosome.</text>
</comment>
<comment type="similarity">
    <text evidence="1">Belongs to the universal ribosomal protein uL2 family.</text>
</comment>